<proteinExistence type="inferred from homology"/>
<protein>
    <recommendedName>
        <fullName>Pro-apoptotic serine protease NMA111</fullName>
        <ecNumber>3.4.21.-</ecNumber>
    </recommendedName>
</protein>
<feature type="chain" id="PRO_0000320354" description="Pro-apoptotic serine protease NMA111">
    <location>
        <begin position="1"/>
        <end position="979"/>
    </location>
</feature>
<feature type="domain" description="PDZ 1">
    <location>
        <begin position="277"/>
        <end position="362"/>
    </location>
</feature>
<feature type="domain" description="PDZ 2">
    <location>
        <begin position="871"/>
        <end position="943"/>
    </location>
</feature>
<feature type="region of interest" description="Disordered" evidence="3">
    <location>
        <begin position="1"/>
        <end position="43"/>
    </location>
</feature>
<feature type="region of interest" description="Serine protease">
    <location>
        <begin position="65"/>
        <end position="260"/>
    </location>
</feature>
<feature type="compositionally biased region" description="Basic and acidic residues" evidence="3">
    <location>
        <begin position="1"/>
        <end position="20"/>
    </location>
</feature>
<feature type="compositionally biased region" description="Low complexity" evidence="3">
    <location>
        <begin position="21"/>
        <end position="34"/>
    </location>
</feature>
<feature type="active site" description="Charge relay system" evidence="2">
    <location>
        <position position="108"/>
    </location>
</feature>
<feature type="active site" description="Charge relay system" evidence="2">
    <location>
        <position position="139"/>
    </location>
</feature>
<feature type="active site" description="Charge relay system" evidence="2">
    <location>
        <position position="222"/>
    </location>
</feature>
<name>NM111_LODEL</name>
<organism>
    <name type="scientific">Lodderomyces elongisporus (strain ATCC 11503 / CBS 2605 / JCM 1781 / NBRC 1676 / NRRL YB-4239)</name>
    <name type="common">Yeast</name>
    <name type="synonym">Saccharomyces elongisporus</name>
    <dbReference type="NCBI Taxonomy" id="379508"/>
    <lineage>
        <taxon>Eukaryota</taxon>
        <taxon>Fungi</taxon>
        <taxon>Dikarya</taxon>
        <taxon>Ascomycota</taxon>
        <taxon>Saccharomycotina</taxon>
        <taxon>Pichiomycetes</taxon>
        <taxon>Debaryomycetaceae</taxon>
        <taxon>Candida/Lodderomyces clade</taxon>
        <taxon>Lodderomyces</taxon>
    </lineage>
</organism>
<reference key="1">
    <citation type="journal article" date="2009" name="Nature">
        <title>Evolution of pathogenicity and sexual reproduction in eight Candida genomes.</title>
        <authorList>
            <person name="Butler G."/>
            <person name="Rasmussen M.D."/>
            <person name="Lin M.F."/>
            <person name="Santos M.A.S."/>
            <person name="Sakthikumar S."/>
            <person name="Munro C.A."/>
            <person name="Rheinbay E."/>
            <person name="Grabherr M."/>
            <person name="Forche A."/>
            <person name="Reedy J.L."/>
            <person name="Agrafioti I."/>
            <person name="Arnaud M.B."/>
            <person name="Bates S."/>
            <person name="Brown A.J.P."/>
            <person name="Brunke S."/>
            <person name="Costanzo M.C."/>
            <person name="Fitzpatrick D.A."/>
            <person name="de Groot P.W.J."/>
            <person name="Harris D."/>
            <person name="Hoyer L.L."/>
            <person name="Hube B."/>
            <person name="Klis F.M."/>
            <person name="Kodira C."/>
            <person name="Lennard N."/>
            <person name="Logue M.E."/>
            <person name="Martin R."/>
            <person name="Neiman A.M."/>
            <person name="Nikolaou E."/>
            <person name="Quail M.A."/>
            <person name="Quinn J."/>
            <person name="Santos M.C."/>
            <person name="Schmitzberger F.F."/>
            <person name="Sherlock G."/>
            <person name="Shah P."/>
            <person name="Silverstein K.A.T."/>
            <person name="Skrzypek M.S."/>
            <person name="Soll D."/>
            <person name="Staggs R."/>
            <person name="Stansfield I."/>
            <person name="Stumpf M.P.H."/>
            <person name="Sudbery P.E."/>
            <person name="Srikantha T."/>
            <person name="Zeng Q."/>
            <person name="Berman J."/>
            <person name="Berriman M."/>
            <person name="Heitman J."/>
            <person name="Gow N.A.R."/>
            <person name="Lorenz M.C."/>
            <person name="Birren B.W."/>
            <person name="Kellis M."/>
            <person name="Cuomo C.A."/>
        </authorList>
    </citation>
    <scope>NUCLEOTIDE SEQUENCE [LARGE SCALE GENOMIC DNA]</scope>
    <source>
        <strain>ATCC 11503 / BCRC 21390 / CBS 2605 / JCM 1781 / NBRC 1676 / NRRL YB-4239</strain>
    </source>
</reference>
<gene>
    <name type="primary">NMA111</name>
    <name type="ORF">LELG_01366</name>
</gene>
<evidence type="ECO:0000250" key="1"/>
<evidence type="ECO:0000255" key="2"/>
<evidence type="ECO:0000256" key="3">
    <source>
        <dbReference type="SAM" id="MobiDB-lite"/>
    </source>
</evidence>
<evidence type="ECO:0000305" key="4"/>
<keyword id="KW-0053">Apoptosis</keyword>
<keyword id="KW-0378">Hydrolase</keyword>
<keyword id="KW-0539">Nucleus</keyword>
<keyword id="KW-0645">Protease</keyword>
<keyword id="KW-1185">Reference proteome</keyword>
<keyword id="KW-0677">Repeat</keyword>
<keyword id="KW-0720">Serine protease</keyword>
<accession>A5DVI0</accession>
<dbReference type="EC" id="3.4.21.-"/>
<dbReference type="EMBL" id="CH981525">
    <property type="protein sequence ID" value="EDK43188.1"/>
    <property type="molecule type" value="Genomic_DNA"/>
</dbReference>
<dbReference type="RefSeq" id="XP_001526538.1">
    <property type="nucleotide sequence ID" value="XM_001526488.1"/>
</dbReference>
<dbReference type="SMR" id="A5DVI0"/>
<dbReference type="FunCoup" id="A5DVI0">
    <property type="interactions" value="122"/>
</dbReference>
<dbReference type="STRING" id="379508.A5DVI0"/>
<dbReference type="MEROPS" id="S01.434"/>
<dbReference type="GeneID" id="5234307"/>
<dbReference type="KEGG" id="lel:PVL30_001337"/>
<dbReference type="VEuPathDB" id="FungiDB:LELG_01366"/>
<dbReference type="eggNOG" id="KOG1421">
    <property type="taxonomic scope" value="Eukaryota"/>
</dbReference>
<dbReference type="HOGENOM" id="CLU_003212_0_0_1"/>
<dbReference type="InParanoid" id="A5DVI0"/>
<dbReference type="OMA" id="FWGHCVF"/>
<dbReference type="OrthoDB" id="4217619at2759"/>
<dbReference type="Proteomes" id="UP000001996">
    <property type="component" value="Unassembled WGS sequence"/>
</dbReference>
<dbReference type="GO" id="GO:0005634">
    <property type="term" value="C:nucleus"/>
    <property type="evidence" value="ECO:0007669"/>
    <property type="project" value="UniProtKB-SubCell"/>
</dbReference>
<dbReference type="GO" id="GO:0004252">
    <property type="term" value="F:serine-type endopeptidase activity"/>
    <property type="evidence" value="ECO:0007669"/>
    <property type="project" value="EnsemblFungi"/>
</dbReference>
<dbReference type="GO" id="GO:0006915">
    <property type="term" value="P:apoptotic process"/>
    <property type="evidence" value="ECO:0007669"/>
    <property type="project" value="UniProtKB-KW"/>
</dbReference>
<dbReference type="GO" id="GO:0034605">
    <property type="term" value="P:cellular response to heat"/>
    <property type="evidence" value="ECO:0007669"/>
    <property type="project" value="EnsemblFungi"/>
</dbReference>
<dbReference type="GO" id="GO:0006629">
    <property type="term" value="P:lipid metabolic process"/>
    <property type="evidence" value="ECO:0007669"/>
    <property type="project" value="EnsemblFungi"/>
</dbReference>
<dbReference type="GO" id="GO:0120174">
    <property type="term" value="P:stress-induced homeostatically regulated protein degradation pathway"/>
    <property type="evidence" value="ECO:0007669"/>
    <property type="project" value="EnsemblFungi"/>
</dbReference>
<dbReference type="CDD" id="cd06786">
    <property type="entry name" value="cpPDZ1_ScNma111-like"/>
    <property type="match status" value="1"/>
</dbReference>
<dbReference type="CDD" id="cd10827">
    <property type="entry name" value="cpPDZ3_ScNma111-like"/>
    <property type="match status" value="1"/>
</dbReference>
<dbReference type="CDD" id="cd06719">
    <property type="entry name" value="PDZ2-4_Nma111p-like"/>
    <property type="match status" value="1"/>
</dbReference>
<dbReference type="Gene3D" id="2.30.42.10">
    <property type="match status" value="2"/>
</dbReference>
<dbReference type="Gene3D" id="2.40.10.120">
    <property type="match status" value="2"/>
</dbReference>
<dbReference type="InterPro" id="IPR025926">
    <property type="entry name" value="PDZ-like_dom"/>
</dbReference>
<dbReference type="InterPro" id="IPR036034">
    <property type="entry name" value="PDZ_sf"/>
</dbReference>
<dbReference type="InterPro" id="IPR009003">
    <property type="entry name" value="Peptidase_S1_PA"/>
</dbReference>
<dbReference type="InterPro" id="IPR001940">
    <property type="entry name" value="Peptidase_S1C"/>
</dbReference>
<dbReference type="PANTHER" id="PTHR46366">
    <property type="entry name" value="PRO-APOPTOTIC SERINE PROTEASE NMA111"/>
    <property type="match status" value="1"/>
</dbReference>
<dbReference type="PANTHER" id="PTHR46366:SF8">
    <property type="entry name" value="PRO-APOPTOTIC SERINE PROTEASE NMA111"/>
    <property type="match status" value="1"/>
</dbReference>
<dbReference type="Pfam" id="PF12812">
    <property type="entry name" value="PDZ_1"/>
    <property type="match status" value="2"/>
</dbReference>
<dbReference type="Pfam" id="PF13365">
    <property type="entry name" value="Trypsin_2"/>
    <property type="match status" value="1"/>
</dbReference>
<dbReference type="PRINTS" id="PR00834">
    <property type="entry name" value="PROTEASES2C"/>
</dbReference>
<dbReference type="SUPFAM" id="SSF50156">
    <property type="entry name" value="PDZ domain-like"/>
    <property type="match status" value="3"/>
</dbReference>
<dbReference type="SUPFAM" id="SSF50494">
    <property type="entry name" value="Trypsin-like serine proteases"/>
    <property type="match status" value="2"/>
</dbReference>
<sequence>MKRNGESHLNGEAKKSRTEQNQEQQDYQDEYYSSSDEELLPSSQTSPVFDIAHSNSDKWQSTIRKVVNSVVSIQFSHVAAFDTETALVSEATGFVVDAERGLILTNRHVVGPGPFTGYVVFDNHESVDVKPIYRDPVHDFGFLQFDTKDVKYLKLTQLDLDPSLAKIGTEIRVVGNDNGEKLSILAGIISRIDRNAPDYGALTYNDFNTEYIQAAASATGGSSGSPVVNEDGKCVALQAGGSTEASTDFFLPVSRPKRALQCIQKGLPITRGDIQVEWQLKPFDECARLGFTAEAEAEARKMFPDKIGMLVAELVLPEGPADGLIKEGDTLISIQGEYISTFVRVDEILDENVGKELEFVFQRSGREIKQMIKIGNLHAITPDRFVHVAGASFNNLSYQVARCYCLPVRGLYVCDGSGSFEFSNQDTLGFIVETVDDKPVANLDEFVEVMKQLPDCSRVPVVYRHVSDMHAEYVQTIYIDRHWYTSFKLAVRNDTTGLWDFTTLQKEALPPAALVPQNAKYVDIPFSDPSRAECSKLVRSFVQVRTLCPSGVDSHPFKKDIGYGVVVDSTNGYVLVSRRYVPHYMCDIFVVFAESIDVAGEVVFLHPHLNYAIIKYDPKLVLADVQSPKFSETPLKRGDDLFFIGYNYNLRVVTDDVKVSSISSLNVTANSIAPRYRGTNLECILLDSKLTHECNTGVLVDNDGTLRAFWLSYLGESNELSFKMGLDVTDVLSILKSLQANHIPKSLRMLDAEFASLTVLQGRTRGVPQTWIKRFEDEAQDLIKFLSVDRVSAPTFEAKPSPLKVGDIVLSVNGKLVKNMRDFASMYDETSLTFNIIRQKQEMTLEVPTIDTTSMETSHVVSWSGALLQKPHYGVRQLMTKIPSEVYIVDKSSCGPAHQYGIVPISFITHVNDQETKDLDSFIQVVKLIPDKTYVKLRLVSFDNIPAAISLKTDYHYFPTTTLKRDAVSGKWNTEKINE</sequence>
<comment type="function">
    <text evidence="1">Nuclear serine protease which mediates apoptosis.</text>
</comment>
<comment type="subcellular location">
    <subcellularLocation>
        <location evidence="1">Nucleus</location>
    </subcellularLocation>
</comment>
<comment type="similarity">
    <text evidence="4">Belongs to the peptidase S1C family.</text>
</comment>